<accession>P86364</accession>
<name>IAA1_DELRE</name>
<organism>
    <name type="scientific">Delonix regia</name>
    <name type="common">Royal poinciana</name>
    <name type="synonym">Poinciana regia</name>
    <dbReference type="NCBI Taxonomy" id="72433"/>
    <lineage>
        <taxon>Eukaryota</taxon>
        <taxon>Viridiplantae</taxon>
        <taxon>Streptophyta</taxon>
        <taxon>Embryophyta</taxon>
        <taxon>Tracheophyta</taxon>
        <taxon>Spermatophyta</taxon>
        <taxon>Magnoliopsida</taxon>
        <taxon>eudicotyledons</taxon>
        <taxon>Gunneridae</taxon>
        <taxon>Pentapetalae</taxon>
        <taxon>rosids</taxon>
        <taxon>fabids</taxon>
        <taxon>Fabales</taxon>
        <taxon>Fabaceae</taxon>
        <taxon>Caesalpinioideae</taxon>
        <taxon>Peltophorum clade</taxon>
        <taxon>Delonix</taxon>
    </lineage>
</organism>
<comment type="function">
    <text evidence="1">Inhibits insect alpha-amylases.</text>
</comment>
<protein>
    <recommendedName>
        <fullName evidence="2">Alpha-amylase inhibitor DR1</fullName>
    </recommendedName>
</protein>
<sequence length="16" mass="1744">SGLLMNFGEQHVNVAQ</sequence>
<reference evidence="3" key="1">
    <citation type="journal article" date="2009" name="Pestic. Biochem. Physiol.">
        <title>Identification of four novel members of Kunitz-like alpha-amylase inhibitors family from Delonix regia with activity toward Coleopteran insects.</title>
        <authorList>
            <person name="Alves D.T."/>
            <person name="Vasconcelos I.M."/>
            <person name="Oliveira J.T.A."/>
            <person name="Farias L.R."/>
            <person name="Dias S.C."/>
            <person name="Chiarello M.D."/>
            <person name="Maria-Neto S."/>
            <person name="Franco O.L."/>
        </authorList>
    </citation>
    <scope>PROTEIN SEQUENCE</scope>
    <scope>FUNCTION</scope>
    <source>
        <tissue evidence="1">Seed</tissue>
    </source>
</reference>
<feature type="chain" id="PRO_0000389531" description="Alpha-amylase inhibitor DR1">
    <location>
        <begin position="1"/>
        <end position="16" status="greater than"/>
    </location>
</feature>
<feature type="non-terminal residue" evidence="2">
    <location>
        <position position="16"/>
    </location>
</feature>
<proteinExistence type="evidence at protein level"/>
<dbReference type="GO" id="GO:0015066">
    <property type="term" value="F:alpha-amylase inhibitor activity"/>
    <property type="evidence" value="ECO:0007669"/>
    <property type="project" value="UniProtKB-KW"/>
</dbReference>
<evidence type="ECO:0000269" key="1">
    <source ref="1"/>
</evidence>
<evidence type="ECO:0000303" key="2">
    <source ref="1"/>
</evidence>
<evidence type="ECO:0000305" key="3"/>
<keyword id="KW-0022">Alpha-amylase inhibitor</keyword>
<keyword id="KW-0903">Direct protein sequencing</keyword>